<dbReference type="EMBL" id="CP000828">
    <property type="protein sequence ID" value="ABW29670.1"/>
    <property type="molecule type" value="Genomic_DNA"/>
</dbReference>
<dbReference type="RefSeq" id="WP_010469320.1">
    <property type="nucleotide sequence ID" value="NC_009925.1"/>
</dbReference>
<dbReference type="SMR" id="B0C1D5"/>
<dbReference type="STRING" id="329726.AM1_4698"/>
<dbReference type="KEGG" id="amr:AM1_4698"/>
<dbReference type="eggNOG" id="COG0089">
    <property type="taxonomic scope" value="Bacteria"/>
</dbReference>
<dbReference type="HOGENOM" id="CLU_037562_3_2_3"/>
<dbReference type="OrthoDB" id="9793353at2"/>
<dbReference type="Proteomes" id="UP000000268">
    <property type="component" value="Chromosome"/>
</dbReference>
<dbReference type="GO" id="GO:1990904">
    <property type="term" value="C:ribonucleoprotein complex"/>
    <property type="evidence" value="ECO:0007669"/>
    <property type="project" value="UniProtKB-KW"/>
</dbReference>
<dbReference type="GO" id="GO:0005840">
    <property type="term" value="C:ribosome"/>
    <property type="evidence" value="ECO:0007669"/>
    <property type="project" value="UniProtKB-KW"/>
</dbReference>
<dbReference type="GO" id="GO:0019843">
    <property type="term" value="F:rRNA binding"/>
    <property type="evidence" value="ECO:0007669"/>
    <property type="project" value="UniProtKB-UniRule"/>
</dbReference>
<dbReference type="GO" id="GO:0003735">
    <property type="term" value="F:structural constituent of ribosome"/>
    <property type="evidence" value="ECO:0007669"/>
    <property type="project" value="InterPro"/>
</dbReference>
<dbReference type="GO" id="GO:0006412">
    <property type="term" value="P:translation"/>
    <property type="evidence" value="ECO:0007669"/>
    <property type="project" value="UniProtKB-UniRule"/>
</dbReference>
<dbReference type="FunFam" id="3.30.70.330:FF:000001">
    <property type="entry name" value="50S ribosomal protein L23"/>
    <property type="match status" value="1"/>
</dbReference>
<dbReference type="Gene3D" id="3.30.70.330">
    <property type="match status" value="1"/>
</dbReference>
<dbReference type="HAMAP" id="MF_01369_B">
    <property type="entry name" value="Ribosomal_uL23_B"/>
    <property type="match status" value="1"/>
</dbReference>
<dbReference type="InterPro" id="IPR012677">
    <property type="entry name" value="Nucleotide-bd_a/b_plait_sf"/>
</dbReference>
<dbReference type="InterPro" id="IPR013025">
    <property type="entry name" value="Ribosomal_uL23-like"/>
</dbReference>
<dbReference type="InterPro" id="IPR012678">
    <property type="entry name" value="Ribosomal_uL23/eL15/eS24_sf"/>
</dbReference>
<dbReference type="InterPro" id="IPR001014">
    <property type="entry name" value="Ribosomal_uL23_CS"/>
</dbReference>
<dbReference type="NCBIfam" id="NF004363">
    <property type="entry name" value="PRK05738.2-4"/>
    <property type="match status" value="1"/>
</dbReference>
<dbReference type="NCBIfam" id="NF004368">
    <property type="entry name" value="PRK05738.3-4"/>
    <property type="match status" value="1"/>
</dbReference>
<dbReference type="PANTHER" id="PTHR11620">
    <property type="entry name" value="60S RIBOSOMAL PROTEIN L23A"/>
    <property type="match status" value="1"/>
</dbReference>
<dbReference type="Pfam" id="PF00276">
    <property type="entry name" value="Ribosomal_L23"/>
    <property type="match status" value="1"/>
</dbReference>
<dbReference type="SUPFAM" id="SSF54189">
    <property type="entry name" value="Ribosomal proteins S24e, L23 and L15e"/>
    <property type="match status" value="1"/>
</dbReference>
<dbReference type="PROSITE" id="PS00050">
    <property type="entry name" value="RIBOSOMAL_L23"/>
    <property type="match status" value="1"/>
</dbReference>
<keyword id="KW-1185">Reference proteome</keyword>
<keyword id="KW-0687">Ribonucleoprotein</keyword>
<keyword id="KW-0689">Ribosomal protein</keyword>
<keyword id="KW-0694">RNA-binding</keyword>
<keyword id="KW-0699">rRNA-binding</keyword>
<gene>
    <name evidence="1" type="primary">rplW</name>
    <name evidence="1" type="synonym">rpl23</name>
    <name type="ordered locus">AM1_4698</name>
</gene>
<comment type="function">
    <text evidence="1">One of the early assembly proteins it binds 23S rRNA. One of the proteins that surrounds the polypeptide exit tunnel on the outside of the ribosome. Forms the main docking site for trigger factor binding to the ribosome.</text>
</comment>
<comment type="subunit">
    <text evidence="1">Part of the 50S ribosomal subunit. Contacts protein L29, and trigger factor when it is bound to the ribosome.</text>
</comment>
<comment type="similarity">
    <text evidence="1">Belongs to the universal ribosomal protein uL23 family.</text>
</comment>
<organism>
    <name type="scientific">Acaryochloris marina (strain MBIC 11017)</name>
    <dbReference type="NCBI Taxonomy" id="329726"/>
    <lineage>
        <taxon>Bacteria</taxon>
        <taxon>Bacillati</taxon>
        <taxon>Cyanobacteriota</taxon>
        <taxon>Cyanophyceae</taxon>
        <taxon>Acaryochloridales</taxon>
        <taxon>Acaryochloridaceae</taxon>
        <taxon>Acaryochloris</taxon>
    </lineage>
</organism>
<name>RL23_ACAM1</name>
<protein>
    <recommendedName>
        <fullName evidence="1">Large ribosomal subunit protein uL23</fullName>
    </recommendedName>
    <alternativeName>
        <fullName evidence="2">50S ribosomal protein L23</fullName>
    </alternativeName>
</protein>
<sequence>MTKVTPTSLADLIRRPIVTEKATLLLENNQYVFEVDPRATKPQIKAAIEELFEVKVTGISTSNMPIKKKRIGKFIGHKAQYKRATVTLAPEFTINLFPEV</sequence>
<reference key="1">
    <citation type="journal article" date="2008" name="Proc. Natl. Acad. Sci. U.S.A.">
        <title>Niche adaptation and genome expansion in the chlorophyll d-producing cyanobacterium Acaryochloris marina.</title>
        <authorList>
            <person name="Swingley W.D."/>
            <person name="Chen M."/>
            <person name="Cheung P.C."/>
            <person name="Conrad A.L."/>
            <person name="Dejesa L.C."/>
            <person name="Hao J."/>
            <person name="Honchak B.M."/>
            <person name="Karbach L.E."/>
            <person name="Kurdoglu A."/>
            <person name="Lahiri S."/>
            <person name="Mastrian S.D."/>
            <person name="Miyashita H."/>
            <person name="Page L."/>
            <person name="Ramakrishna P."/>
            <person name="Satoh S."/>
            <person name="Sattley W.M."/>
            <person name="Shimada Y."/>
            <person name="Taylor H.L."/>
            <person name="Tomo T."/>
            <person name="Tsuchiya T."/>
            <person name="Wang Z.T."/>
            <person name="Raymond J."/>
            <person name="Mimuro M."/>
            <person name="Blankenship R.E."/>
            <person name="Touchman J.W."/>
        </authorList>
    </citation>
    <scope>NUCLEOTIDE SEQUENCE [LARGE SCALE GENOMIC DNA]</scope>
    <source>
        <strain>MBIC 11017</strain>
    </source>
</reference>
<proteinExistence type="inferred from homology"/>
<feature type="chain" id="PRO_1000144514" description="Large ribosomal subunit protein uL23">
    <location>
        <begin position="1"/>
        <end position="100"/>
    </location>
</feature>
<accession>B0C1D5</accession>
<evidence type="ECO:0000255" key="1">
    <source>
        <dbReference type="HAMAP-Rule" id="MF_01369"/>
    </source>
</evidence>
<evidence type="ECO:0000305" key="2"/>